<comment type="subunit">
    <text evidence="1">Part of the 50S ribosomal subunit. Contacts protein L32.</text>
</comment>
<comment type="similarity">
    <text evidence="1">Belongs to the bacterial ribosomal protein bL17 family.</text>
</comment>
<accession>B0T2E7</accession>
<keyword id="KW-0687">Ribonucleoprotein</keyword>
<keyword id="KW-0689">Ribosomal protein</keyword>
<protein>
    <recommendedName>
        <fullName evidence="1">Large ribosomal subunit protein bL17</fullName>
    </recommendedName>
    <alternativeName>
        <fullName evidence="2">50S ribosomal protein L17</fullName>
    </alternativeName>
</protein>
<sequence length="137" mass="15272">MRHGKAHRKLGRTSAHRTAMFANMSASLIKHEQIVTTLPKAKELRPFVEKLVTLAKRGDLHARRQAISIVRDVEQVGKLFAAIGPRYKERQGGYIRVLKAGFRYGDNAPLAVIEFVDRDVSAKGKDSGPVYSNDSDD</sequence>
<feature type="chain" id="PRO_1000087162" description="Large ribosomal subunit protein bL17">
    <location>
        <begin position="1"/>
        <end position="137"/>
    </location>
</feature>
<reference key="1">
    <citation type="submission" date="2008-01" db="EMBL/GenBank/DDBJ databases">
        <title>Complete sequence of chromosome of Caulobacter sp. K31.</title>
        <authorList>
            <consortium name="US DOE Joint Genome Institute"/>
            <person name="Copeland A."/>
            <person name="Lucas S."/>
            <person name="Lapidus A."/>
            <person name="Barry K."/>
            <person name="Glavina del Rio T."/>
            <person name="Dalin E."/>
            <person name="Tice H."/>
            <person name="Pitluck S."/>
            <person name="Bruce D."/>
            <person name="Goodwin L."/>
            <person name="Thompson L.S."/>
            <person name="Brettin T."/>
            <person name="Detter J.C."/>
            <person name="Han C."/>
            <person name="Schmutz J."/>
            <person name="Larimer F."/>
            <person name="Land M."/>
            <person name="Hauser L."/>
            <person name="Kyrpides N."/>
            <person name="Kim E."/>
            <person name="Stephens C."/>
            <person name="Richardson P."/>
        </authorList>
    </citation>
    <scope>NUCLEOTIDE SEQUENCE [LARGE SCALE GENOMIC DNA]</scope>
    <source>
        <strain>K31</strain>
    </source>
</reference>
<name>RL17_CAUSK</name>
<proteinExistence type="inferred from homology"/>
<organism>
    <name type="scientific">Caulobacter sp. (strain K31)</name>
    <dbReference type="NCBI Taxonomy" id="366602"/>
    <lineage>
        <taxon>Bacteria</taxon>
        <taxon>Pseudomonadati</taxon>
        <taxon>Pseudomonadota</taxon>
        <taxon>Alphaproteobacteria</taxon>
        <taxon>Caulobacterales</taxon>
        <taxon>Caulobacteraceae</taxon>
        <taxon>Caulobacter</taxon>
    </lineage>
</organism>
<evidence type="ECO:0000255" key="1">
    <source>
        <dbReference type="HAMAP-Rule" id="MF_01368"/>
    </source>
</evidence>
<evidence type="ECO:0000305" key="2"/>
<gene>
    <name evidence="1" type="primary">rplQ</name>
    <name type="ordered locus">Caul_1639</name>
</gene>
<dbReference type="EMBL" id="CP000927">
    <property type="protein sequence ID" value="ABZ70768.1"/>
    <property type="molecule type" value="Genomic_DNA"/>
</dbReference>
<dbReference type="SMR" id="B0T2E7"/>
<dbReference type="STRING" id="366602.Caul_1639"/>
<dbReference type="KEGG" id="cak:Caul_1639"/>
<dbReference type="eggNOG" id="COG0203">
    <property type="taxonomic scope" value="Bacteria"/>
</dbReference>
<dbReference type="HOGENOM" id="CLU_074407_2_0_5"/>
<dbReference type="OrthoDB" id="9809073at2"/>
<dbReference type="GO" id="GO:0022625">
    <property type="term" value="C:cytosolic large ribosomal subunit"/>
    <property type="evidence" value="ECO:0007669"/>
    <property type="project" value="TreeGrafter"/>
</dbReference>
<dbReference type="GO" id="GO:0003735">
    <property type="term" value="F:structural constituent of ribosome"/>
    <property type="evidence" value="ECO:0007669"/>
    <property type="project" value="InterPro"/>
</dbReference>
<dbReference type="GO" id="GO:0006412">
    <property type="term" value="P:translation"/>
    <property type="evidence" value="ECO:0007669"/>
    <property type="project" value="UniProtKB-UniRule"/>
</dbReference>
<dbReference type="FunFam" id="3.90.1030.10:FF:000001">
    <property type="entry name" value="50S ribosomal protein L17"/>
    <property type="match status" value="1"/>
</dbReference>
<dbReference type="Gene3D" id="3.90.1030.10">
    <property type="entry name" value="Ribosomal protein L17"/>
    <property type="match status" value="1"/>
</dbReference>
<dbReference type="HAMAP" id="MF_01368">
    <property type="entry name" value="Ribosomal_bL17"/>
    <property type="match status" value="1"/>
</dbReference>
<dbReference type="InterPro" id="IPR000456">
    <property type="entry name" value="Ribosomal_bL17"/>
</dbReference>
<dbReference type="InterPro" id="IPR047859">
    <property type="entry name" value="Ribosomal_bL17_CS"/>
</dbReference>
<dbReference type="InterPro" id="IPR036373">
    <property type="entry name" value="Ribosomal_bL17_sf"/>
</dbReference>
<dbReference type="NCBIfam" id="TIGR00059">
    <property type="entry name" value="L17"/>
    <property type="match status" value="1"/>
</dbReference>
<dbReference type="PANTHER" id="PTHR14413:SF16">
    <property type="entry name" value="LARGE RIBOSOMAL SUBUNIT PROTEIN BL17M"/>
    <property type="match status" value="1"/>
</dbReference>
<dbReference type="PANTHER" id="PTHR14413">
    <property type="entry name" value="RIBOSOMAL PROTEIN L17"/>
    <property type="match status" value="1"/>
</dbReference>
<dbReference type="Pfam" id="PF01196">
    <property type="entry name" value="Ribosomal_L17"/>
    <property type="match status" value="1"/>
</dbReference>
<dbReference type="SUPFAM" id="SSF64263">
    <property type="entry name" value="Prokaryotic ribosomal protein L17"/>
    <property type="match status" value="1"/>
</dbReference>
<dbReference type="PROSITE" id="PS01167">
    <property type="entry name" value="RIBOSOMAL_L17"/>
    <property type="match status" value="1"/>
</dbReference>